<sequence length="431" mass="47972">MQMFCYQCSQAANGTGCTEYGVCGKSPTVARLQDNLVFAIKGISAYYYHARELGYDDPEIAGFLDEALYSTLTNVNFDAQSFVEYALEAGRMNLRAMQLLKKAHIETYGEPTPVEVETGTKKGKGIIVTGHNLKALEELLKQVEGTNVYVYTHSEMLPAHGYPGLRKYKNLVGNLGKAWYDQRKLFTEYPVAILGTSNCVLIPSESYRDRMFTTSIARLPGVKHIDGYDYTEVIEKAKSLPDLEEKPGSYKLRTGFSTSVVVSLADKIKELVEAGKIKHFLVVGGCDVPFKRNEYYREFVQKLPKETVVITLACGKFRINDLDLGDIEGIPRLIDVGQCNDTIVAIEIAQALAKVFGVEVTDLPLTLVLTWMEQKAVAILWTLLALGLKNIYVGPVLPAWVNEDILKVLTAEFGLKTISEPEKDIKEILKV</sequence>
<proteinExistence type="inferred from homology"/>
<dbReference type="EC" id="1.7.99.1" evidence="1"/>
<dbReference type="EMBL" id="CP000702">
    <property type="protein sequence ID" value="ABQ47583.1"/>
    <property type="molecule type" value="Genomic_DNA"/>
</dbReference>
<dbReference type="RefSeq" id="WP_011943996.1">
    <property type="nucleotide sequence ID" value="NC_009486.1"/>
</dbReference>
<dbReference type="SMR" id="A5IN10"/>
<dbReference type="STRING" id="390874.Tpet_1577"/>
<dbReference type="KEGG" id="tpt:Tpet_1577"/>
<dbReference type="eggNOG" id="COG1151">
    <property type="taxonomic scope" value="Bacteria"/>
</dbReference>
<dbReference type="HOGENOM" id="CLU_038344_0_0_0"/>
<dbReference type="Proteomes" id="UP000006558">
    <property type="component" value="Chromosome"/>
</dbReference>
<dbReference type="GO" id="GO:0005737">
    <property type="term" value="C:cytoplasm"/>
    <property type="evidence" value="ECO:0007669"/>
    <property type="project" value="UniProtKB-SubCell"/>
</dbReference>
<dbReference type="GO" id="GO:0051539">
    <property type="term" value="F:4 iron, 4 sulfur cluster binding"/>
    <property type="evidence" value="ECO:0007669"/>
    <property type="project" value="UniProtKB-KW"/>
</dbReference>
<dbReference type="GO" id="GO:0050418">
    <property type="term" value="F:hydroxylamine reductase activity"/>
    <property type="evidence" value="ECO:0007669"/>
    <property type="project" value="UniProtKB-UniRule"/>
</dbReference>
<dbReference type="GO" id="GO:0046872">
    <property type="term" value="F:metal ion binding"/>
    <property type="evidence" value="ECO:0007669"/>
    <property type="project" value="UniProtKB-KW"/>
</dbReference>
<dbReference type="GO" id="GO:0004601">
    <property type="term" value="F:peroxidase activity"/>
    <property type="evidence" value="ECO:0007669"/>
    <property type="project" value="TreeGrafter"/>
</dbReference>
<dbReference type="GO" id="GO:0042542">
    <property type="term" value="P:response to hydrogen peroxide"/>
    <property type="evidence" value="ECO:0007669"/>
    <property type="project" value="TreeGrafter"/>
</dbReference>
<dbReference type="CDD" id="cd01914">
    <property type="entry name" value="HCP"/>
    <property type="match status" value="1"/>
</dbReference>
<dbReference type="Gene3D" id="1.20.1270.20">
    <property type="match status" value="1"/>
</dbReference>
<dbReference type="Gene3D" id="3.40.50.2030">
    <property type="match status" value="2"/>
</dbReference>
<dbReference type="HAMAP" id="MF_00069">
    <property type="entry name" value="Hydroxylam_reduct"/>
    <property type="match status" value="1"/>
</dbReference>
<dbReference type="InterPro" id="IPR004137">
    <property type="entry name" value="HCP/CODH"/>
</dbReference>
<dbReference type="InterPro" id="IPR010048">
    <property type="entry name" value="Hydroxylam_reduct"/>
</dbReference>
<dbReference type="InterPro" id="IPR016099">
    <property type="entry name" value="Prismane-like_a/b-sand"/>
</dbReference>
<dbReference type="InterPro" id="IPR011254">
    <property type="entry name" value="Prismane-like_sf"/>
</dbReference>
<dbReference type="InterPro" id="IPR016100">
    <property type="entry name" value="Prismane_a-bundle"/>
</dbReference>
<dbReference type="NCBIfam" id="TIGR01703">
    <property type="entry name" value="hybrid_clust"/>
    <property type="match status" value="1"/>
</dbReference>
<dbReference type="NCBIfam" id="NF003658">
    <property type="entry name" value="PRK05290.1"/>
    <property type="match status" value="1"/>
</dbReference>
<dbReference type="PANTHER" id="PTHR30109">
    <property type="entry name" value="HYDROXYLAMINE REDUCTASE"/>
    <property type="match status" value="1"/>
</dbReference>
<dbReference type="PANTHER" id="PTHR30109:SF0">
    <property type="entry name" value="HYDROXYLAMINE REDUCTASE"/>
    <property type="match status" value="1"/>
</dbReference>
<dbReference type="Pfam" id="PF03063">
    <property type="entry name" value="Prismane"/>
    <property type="match status" value="2"/>
</dbReference>
<dbReference type="SUPFAM" id="SSF56821">
    <property type="entry name" value="Prismane protein-like"/>
    <property type="match status" value="1"/>
</dbReference>
<reference key="1">
    <citation type="submission" date="2007-05" db="EMBL/GenBank/DDBJ databases">
        <title>Complete sequence of Thermotoga petrophila RKU-1.</title>
        <authorList>
            <consortium name="US DOE Joint Genome Institute"/>
            <person name="Copeland A."/>
            <person name="Lucas S."/>
            <person name="Lapidus A."/>
            <person name="Barry K."/>
            <person name="Glavina del Rio T."/>
            <person name="Dalin E."/>
            <person name="Tice H."/>
            <person name="Pitluck S."/>
            <person name="Sims D."/>
            <person name="Brettin T."/>
            <person name="Bruce D."/>
            <person name="Detter J.C."/>
            <person name="Han C."/>
            <person name="Tapia R."/>
            <person name="Schmutz J."/>
            <person name="Larimer F."/>
            <person name="Land M."/>
            <person name="Hauser L."/>
            <person name="Kyrpides N."/>
            <person name="Mikhailova N."/>
            <person name="Nelson K."/>
            <person name="Gogarten J.P."/>
            <person name="Noll K."/>
            <person name="Richardson P."/>
        </authorList>
    </citation>
    <scope>NUCLEOTIDE SEQUENCE [LARGE SCALE GENOMIC DNA]</scope>
    <source>
        <strain>ATCC BAA-488 / DSM 13995 / JCM 10881 / RKU-1</strain>
    </source>
</reference>
<evidence type="ECO:0000255" key="1">
    <source>
        <dbReference type="HAMAP-Rule" id="MF_00069"/>
    </source>
</evidence>
<feature type="chain" id="PRO_1000009177" description="Hydroxylamine reductase">
    <location>
        <begin position="1"/>
        <end position="431"/>
    </location>
</feature>
<feature type="binding site" evidence="1">
    <location>
        <position position="5"/>
    </location>
    <ligand>
        <name>[4Fe-4S] cluster</name>
        <dbReference type="ChEBI" id="CHEBI:49883"/>
    </ligand>
</feature>
<feature type="binding site" evidence="1">
    <location>
        <position position="8"/>
    </location>
    <ligand>
        <name>[4Fe-4S] cluster</name>
        <dbReference type="ChEBI" id="CHEBI:49883"/>
    </ligand>
</feature>
<feature type="binding site" evidence="1">
    <location>
        <position position="17"/>
    </location>
    <ligand>
        <name>[4Fe-4S] cluster</name>
        <dbReference type="ChEBI" id="CHEBI:49883"/>
    </ligand>
</feature>
<feature type="binding site" evidence="1">
    <location>
        <position position="23"/>
    </location>
    <ligand>
        <name>[4Fe-4S] cluster</name>
        <dbReference type="ChEBI" id="CHEBI:49883"/>
    </ligand>
</feature>
<feature type="binding site" evidence="1">
    <location>
        <position position="131"/>
    </location>
    <ligand>
        <name>hybrid [4Fe-2O-2S] cluster</name>
        <dbReference type="ChEBI" id="CHEBI:60519"/>
    </ligand>
</feature>
<feature type="binding site" evidence="1">
    <location>
        <position position="155"/>
    </location>
    <ligand>
        <name>hybrid [4Fe-2O-2S] cluster</name>
        <dbReference type="ChEBI" id="CHEBI:60519"/>
    </ligand>
</feature>
<feature type="binding site" evidence="1">
    <location>
        <position position="199"/>
    </location>
    <ligand>
        <name>hybrid [4Fe-2O-2S] cluster</name>
        <dbReference type="ChEBI" id="CHEBI:60519"/>
    </ligand>
</feature>
<feature type="binding site" description="via persulfide group" evidence="1">
    <location>
        <position position="286"/>
    </location>
    <ligand>
        <name>hybrid [4Fe-2O-2S] cluster</name>
        <dbReference type="ChEBI" id="CHEBI:60519"/>
    </ligand>
</feature>
<feature type="binding site" evidence="1">
    <location>
        <position position="314"/>
    </location>
    <ligand>
        <name>hybrid [4Fe-2O-2S] cluster</name>
        <dbReference type="ChEBI" id="CHEBI:60519"/>
    </ligand>
</feature>
<feature type="binding site" evidence="1">
    <location>
        <position position="339"/>
    </location>
    <ligand>
        <name>hybrid [4Fe-2O-2S] cluster</name>
        <dbReference type="ChEBI" id="CHEBI:60519"/>
    </ligand>
</feature>
<feature type="binding site" evidence="1">
    <location>
        <position position="373"/>
    </location>
    <ligand>
        <name>hybrid [4Fe-2O-2S] cluster</name>
        <dbReference type="ChEBI" id="CHEBI:60519"/>
    </ligand>
</feature>
<feature type="binding site" evidence="1">
    <location>
        <position position="375"/>
    </location>
    <ligand>
        <name>hybrid [4Fe-2O-2S] cluster</name>
        <dbReference type="ChEBI" id="CHEBI:60519"/>
    </ligand>
</feature>
<feature type="modified residue" description="Cysteine persulfide" evidence="1">
    <location>
        <position position="286"/>
    </location>
</feature>
<protein>
    <recommendedName>
        <fullName evidence="1">Hydroxylamine reductase</fullName>
        <ecNumber evidence="1">1.7.99.1</ecNumber>
    </recommendedName>
    <alternativeName>
        <fullName evidence="1">Hybrid-cluster protein</fullName>
        <shortName evidence="1">HCP</shortName>
    </alternativeName>
    <alternativeName>
        <fullName evidence="1">Prismane protein</fullName>
    </alternativeName>
</protein>
<keyword id="KW-0004">4Fe-4S</keyword>
<keyword id="KW-0963">Cytoplasm</keyword>
<keyword id="KW-0408">Iron</keyword>
<keyword id="KW-0411">Iron-sulfur</keyword>
<keyword id="KW-0479">Metal-binding</keyword>
<keyword id="KW-0560">Oxidoreductase</keyword>
<comment type="function">
    <text evidence="1">Catalyzes the reduction of hydroxylamine to form NH(3) and H(2)O.</text>
</comment>
<comment type="catalytic activity">
    <reaction evidence="1">
        <text>A + NH4(+) + H2O = hydroxylamine + AH2 + H(+)</text>
        <dbReference type="Rhea" id="RHEA:22052"/>
        <dbReference type="ChEBI" id="CHEBI:13193"/>
        <dbReference type="ChEBI" id="CHEBI:15377"/>
        <dbReference type="ChEBI" id="CHEBI:15378"/>
        <dbReference type="ChEBI" id="CHEBI:15429"/>
        <dbReference type="ChEBI" id="CHEBI:17499"/>
        <dbReference type="ChEBI" id="CHEBI:28938"/>
        <dbReference type="EC" id="1.7.99.1"/>
    </reaction>
</comment>
<comment type="cofactor">
    <cofactor evidence="1">
        <name>[4Fe-4S] cluster</name>
        <dbReference type="ChEBI" id="CHEBI:49883"/>
    </cofactor>
    <text evidence="1">Binds 1 [4Fe-4S] cluster.</text>
</comment>
<comment type="cofactor">
    <cofactor evidence="1">
        <name>hybrid [4Fe-2O-2S] cluster</name>
        <dbReference type="ChEBI" id="CHEBI:60519"/>
    </cofactor>
    <text evidence="1">Binds 1 hybrid [4Fe-2O-2S] cluster.</text>
</comment>
<comment type="subcellular location">
    <subcellularLocation>
        <location evidence="1">Cytoplasm</location>
    </subcellularLocation>
</comment>
<comment type="similarity">
    <text evidence="1">Belongs to the HCP family.</text>
</comment>
<name>HCP_THEP1</name>
<organism>
    <name type="scientific">Thermotoga petrophila (strain ATCC BAA-488 / DSM 13995 / JCM 10881 / RKU-1)</name>
    <dbReference type="NCBI Taxonomy" id="390874"/>
    <lineage>
        <taxon>Bacteria</taxon>
        <taxon>Thermotogati</taxon>
        <taxon>Thermotogota</taxon>
        <taxon>Thermotogae</taxon>
        <taxon>Thermotogales</taxon>
        <taxon>Thermotogaceae</taxon>
        <taxon>Thermotoga</taxon>
    </lineage>
</organism>
<accession>A5IN10</accession>
<gene>
    <name evidence="1" type="primary">hcp</name>
    <name type="ordered locus">Tpet_1577</name>
</gene>